<feature type="initiator methionine" description="Removed" evidence="2 3">
    <location>
        <position position="1"/>
    </location>
</feature>
<feature type="chain" id="PRO_0000167151" description="Small ribosomal subunit protein bS16">
    <location>
        <begin position="2"/>
        <end position="89"/>
    </location>
</feature>
<feature type="sequence conflict" description="In Ref. 2; AA sequence." evidence="4" ref="2">
    <original>A</original>
    <variation>T</variation>
    <location>
        <position position="12"/>
    </location>
</feature>
<accession>P81290</accession>
<evidence type="ECO:0000255" key="1">
    <source>
        <dbReference type="HAMAP-Rule" id="MF_00385"/>
    </source>
</evidence>
<evidence type="ECO:0000269" key="2">
    <source>
    </source>
</evidence>
<evidence type="ECO:0000269" key="3">
    <source>
    </source>
</evidence>
<evidence type="ECO:0000305" key="4"/>
<organism>
    <name type="scientific">Geobacillus stearothermophilus</name>
    <name type="common">Bacillus stearothermophilus</name>
    <dbReference type="NCBI Taxonomy" id="1422"/>
    <lineage>
        <taxon>Bacteria</taxon>
        <taxon>Bacillati</taxon>
        <taxon>Bacillota</taxon>
        <taxon>Bacilli</taxon>
        <taxon>Bacillales</taxon>
        <taxon>Anoxybacillaceae</taxon>
        <taxon>Geobacillus</taxon>
    </lineage>
</organism>
<keyword id="KW-0903">Direct protein sequencing</keyword>
<keyword id="KW-0687">Ribonucleoprotein</keyword>
<keyword id="KW-0689">Ribosomal protein</keyword>
<dbReference type="SMR" id="P81290"/>
<dbReference type="GO" id="GO:0005737">
    <property type="term" value="C:cytoplasm"/>
    <property type="evidence" value="ECO:0007669"/>
    <property type="project" value="UniProtKB-ARBA"/>
</dbReference>
<dbReference type="GO" id="GO:0015935">
    <property type="term" value="C:small ribosomal subunit"/>
    <property type="evidence" value="ECO:0007669"/>
    <property type="project" value="TreeGrafter"/>
</dbReference>
<dbReference type="GO" id="GO:0003735">
    <property type="term" value="F:structural constituent of ribosome"/>
    <property type="evidence" value="ECO:0007669"/>
    <property type="project" value="InterPro"/>
</dbReference>
<dbReference type="GO" id="GO:0006412">
    <property type="term" value="P:translation"/>
    <property type="evidence" value="ECO:0007669"/>
    <property type="project" value="UniProtKB-UniRule"/>
</dbReference>
<dbReference type="FunFam" id="3.30.1320.10:FF:000002">
    <property type="entry name" value="30S ribosomal protein S16"/>
    <property type="match status" value="1"/>
</dbReference>
<dbReference type="Gene3D" id="3.30.1320.10">
    <property type="match status" value="1"/>
</dbReference>
<dbReference type="HAMAP" id="MF_00385">
    <property type="entry name" value="Ribosomal_bS16"/>
    <property type="match status" value="1"/>
</dbReference>
<dbReference type="InterPro" id="IPR000307">
    <property type="entry name" value="Ribosomal_bS16"/>
</dbReference>
<dbReference type="InterPro" id="IPR020592">
    <property type="entry name" value="Ribosomal_bS16_CS"/>
</dbReference>
<dbReference type="InterPro" id="IPR023803">
    <property type="entry name" value="Ribosomal_bS16_dom_sf"/>
</dbReference>
<dbReference type="NCBIfam" id="TIGR00002">
    <property type="entry name" value="S16"/>
    <property type="match status" value="1"/>
</dbReference>
<dbReference type="PANTHER" id="PTHR12919">
    <property type="entry name" value="30S RIBOSOMAL PROTEIN S16"/>
    <property type="match status" value="1"/>
</dbReference>
<dbReference type="PANTHER" id="PTHR12919:SF20">
    <property type="entry name" value="SMALL RIBOSOMAL SUBUNIT PROTEIN BS16M"/>
    <property type="match status" value="1"/>
</dbReference>
<dbReference type="Pfam" id="PF00886">
    <property type="entry name" value="Ribosomal_S16"/>
    <property type="match status" value="1"/>
</dbReference>
<dbReference type="SUPFAM" id="SSF54565">
    <property type="entry name" value="Ribosomal protein S16"/>
    <property type="match status" value="1"/>
</dbReference>
<dbReference type="PROSITE" id="PS00732">
    <property type="entry name" value="RIBOSOMAL_S16"/>
    <property type="match status" value="1"/>
</dbReference>
<sequence>MAVKIRLKRMGAKKKPFYRIVVADSRSPRDGRFIETIGTYNPVAEPAEIKIDEELALKWLQNGAKPSDTRSLLSKQGLLEKFHNLKYGK</sequence>
<name>RS16_GEOSE</name>
<comment type="similarity">
    <text evidence="1">Belongs to the bacterial ribosomal protein bS16 family.</text>
</comment>
<proteinExistence type="evidence at protein level"/>
<reference key="1">
    <citation type="journal article" date="1991" name="Biochimie">
        <title>Primary structures of ribosomal proteins from the archaebacterium Halobacterium marismortui and the eubacterium Bacillus stearothermophilus.</title>
        <authorList>
            <person name="Arndt E."/>
            <person name="Scholzen T."/>
            <person name="Kromer W."/>
            <person name="Hatakeyama T."/>
            <person name="Kimura M."/>
        </authorList>
    </citation>
    <scope>PROTEIN SEQUENCE OF 2-89</scope>
</reference>
<reference key="2">
    <citation type="journal article" date="1974" name="FEBS Lett.">
        <title>Procaryotic ribosomal proteins: N-terminal sequence homologies and structural correspondence of 30 S ribosomal proteins from Escherichia coli and Bacillus stearothermophilus.</title>
        <authorList>
            <person name="Yaguchi M."/>
            <person name="Matheson A.T."/>
            <person name="Visentin L.P."/>
        </authorList>
    </citation>
    <scope>PROTEIN SEQUENCE OF 2-16</scope>
    <source>
        <strain>DSM 13240 / CIP 106956 / 10</strain>
    </source>
</reference>
<gene>
    <name evidence="1" type="primary">rpsP</name>
</gene>
<protein>
    <recommendedName>
        <fullName evidence="1">Small ribosomal subunit protein bS16</fullName>
    </recommendedName>
    <alternativeName>
        <fullName evidence="4">30S ribosomal protein S16</fullName>
    </alternativeName>
    <alternativeName>
        <fullName>BS15</fullName>
    </alternativeName>
</protein>